<keyword id="KW-0012">Acyltransferase</keyword>
<keyword id="KW-0028">Amino-acid biosynthesis</keyword>
<keyword id="KW-0963">Cytoplasm</keyword>
<keyword id="KW-0486">Methionine biosynthesis</keyword>
<keyword id="KW-1185">Reference proteome</keyword>
<keyword id="KW-0808">Transferase</keyword>
<sequence>MPIKIDKKLPAVDILSSENIFVMDDDRADHQDIRPLNILVLNLMPQKMVTETQILRHLANTPLQLTIDFLYMSSHQSKTTRAEHMETFYKTFDEVKNRYFDGLIITGAPVEHLPFEAVDYWEEFQRVIEWSKTHVFSTLHICWGAQAGLYARYGVDKHQMTRKLSGVYSQLADSSNLLFRGFDDEFYAPHSRHTEVLKEDIVNLTNLEILSYGEDMGLSVLASRDLREVYSFGHMEYDRDTLSKEYFRDLKAGKNPHIPENYFKNDDVHTTPALCWSSAAALFFSNWVNYAVYQETPFDWESPENDVSFFAYL</sequence>
<accession>A3CNR2</accession>
<gene>
    <name evidence="1" type="primary">metAA</name>
    <name type="ordered locus">SSA_1420</name>
</gene>
<proteinExistence type="inferred from homology"/>
<reference key="1">
    <citation type="journal article" date="2007" name="J. Bacteriol.">
        <title>Genome of the opportunistic pathogen Streptococcus sanguinis.</title>
        <authorList>
            <person name="Xu P."/>
            <person name="Alves J.M."/>
            <person name="Kitten T."/>
            <person name="Brown A."/>
            <person name="Chen Z."/>
            <person name="Ozaki L.S."/>
            <person name="Manque P."/>
            <person name="Ge X."/>
            <person name="Serrano M.G."/>
            <person name="Puiu D."/>
            <person name="Hendricks S."/>
            <person name="Wang Y."/>
            <person name="Chaplin M.D."/>
            <person name="Akan D."/>
            <person name="Paik S."/>
            <person name="Peterson D.L."/>
            <person name="Macrina F.L."/>
            <person name="Buck G.A."/>
        </authorList>
    </citation>
    <scope>NUCLEOTIDE SEQUENCE [LARGE SCALE GENOMIC DNA]</scope>
    <source>
        <strain>SK36</strain>
    </source>
</reference>
<comment type="function">
    <text evidence="1">Transfers an acetyl group from acetyl-CoA to L-homoserine, forming acetyl-L-homoserine.</text>
</comment>
<comment type="catalytic activity">
    <reaction evidence="1">
        <text>L-homoserine + acetyl-CoA = O-acetyl-L-homoserine + CoA</text>
        <dbReference type="Rhea" id="RHEA:13701"/>
        <dbReference type="ChEBI" id="CHEBI:57287"/>
        <dbReference type="ChEBI" id="CHEBI:57288"/>
        <dbReference type="ChEBI" id="CHEBI:57476"/>
        <dbReference type="ChEBI" id="CHEBI:57716"/>
        <dbReference type="EC" id="2.3.1.31"/>
    </reaction>
</comment>
<comment type="pathway">
    <text evidence="1">Amino-acid biosynthesis; L-methionine biosynthesis via de novo pathway; O-acetyl-L-homoserine from L-homoserine: step 1/1.</text>
</comment>
<comment type="subcellular location">
    <subcellularLocation>
        <location evidence="1">Cytoplasm</location>
    </subcellularLocation>
</comment>
<comment type="similarity">
    <text evidence="1">Belongs to the MetA family.</text>
</comment>
<dbReference type="EC" id="2.3.1.31" evidence="1"/>
<dbReference type="EMBL" id="CP000387">
    <property type="protein sequence ID" value="ABN44817.1"/>
    <property type="molecule type" value="Genomic_DNA"/>
</dbReference>
<dbReference type="RefSeq" id="WP_011837123.1">
    <property type="nucleotide sequence ID" value="NC_009009.1"/>
</dbReference>
<dbReference type="RefSeq" id="YP_001035367.1">
    <property type="nucleotide sequence ID" value="NC_009009.1"/>
</dbReference>
<dbReference type="SMR" id="A3CNR2"/>
<dbReference type="STRING" id="388919.SSA_1420"/>
<dbReference type="KEGG" id="ssa:SSA_1420"/>
<dbReference type="PATRIC" id="fig|388919.9.peg.1347"/>
<dbReference type="eggNOG" id="COG1897">
    <property type="taxonomic scope" value="Bacteria"/>
</dbReference>
<dbReference type="HOGENOM" id="CLU_057851_0_1_9"/>
<dbReference type="OrthoDB" id="9772423at2"/>
<dbReference type="UniPathway" id="UPA00051">
    <property type="reaction ID" value="UER00074"/>
</dbReference>
<dbReference type="Proteomes" id="UP000002148">
    <property type="component" value="Chromosome"/>
</dbReference>
<dbReference type="GO" id="GO:0005737">
    <property type="term" value="C:cytoplasm"/>
    <property type="evidence" value="ECO:0007669"/>
    <property type="project" value="UniProtKB-SubCell"/>
</dbReference>
<dbReference type="GO" id="GO:0004414">
    <property type="term" value="F:homoserine O-acetyltransferase activity"/>
    <property type="evidence" value="ECO:0007669"/>
    <property type="project" value="UniProtKB-EC"/>
</dbReference>
<dbReference type="GO" id="GO:0008899">
    <property type="term" value="F:homoserine O-succinyltransferase activity"/>
    <property type="evidence" value="ECO:0007669"/>
    <property type="project" value="UniProtKB-UniRule"/>
</dbReference>
<dbReference type="GO" id="GO:0019281">
    <property type="term" value="P:L-methionine biosynthetic process from homoserine via O-succinyl-L-homoserine and cystathionine"/>
    <property type="evidence" value="ECO:0007669"/>
    <property type="project" value="InterPro"/>
</dbReference>
<dbReference type="CDD" id="cd03131">
    <property type="entry name" value="GATase1_HTS"/>
    <property type="match status" value="1"/>
</dbReference>
<dbReference type="FunFam" id="3.40.50.880:FF:000004">
    <property type="entry name" value="Homoserine O-succinyltransferase"/>
    <property type="match status" value="1"/>
</dbReference>
<dbReference type="Gene3D" id="3.40.50.880">
    <property type="match status" value="1"/>
</dbReference>
<dbReference type="HAMAP" id="MF_00295">
    <property type="entry name" value="MetA_acyltransf"/>
    <property type="match status" value="1"/>
</dbReference>
<dbReference type="InterPro" id="IPR029062">
    <property type="entry name" value="Class_I_gatase-like"/>
</dbReference>
<dbReference type="InterPro" id="IPR005697">
    <property type="entry name" value="HST_MetA"/>
</dbReference>
<dbReference type="InterPro" id="IPR033752">
    <property type="entry name" value="MetA_family"/>
</dbReference>
<dbReference type="NCBIfam" id="TIGR01001">
    <property type="entry name" value="metA"/>
    <property type="match status" value="1"/>
</dbReference>
<dbReference type="PANTHER" id="PTHR20919">
    <property type="entry name" value="HOMOSERINE O-SUCCINYLTRANSFERASE"/>
    <property type="match status" value="1"/>
</dbReference>
<dbReference type="PANTHER" id="PTHR20919:SF0">
    <property type="entry name" value="HOMOSERINE O-SUCCINYLTRANSFERASE"/>
    <property type="match status" value="1"/>
</dbReference>
<dbReference type="Pfam" id="PF04204">
    <property type="entry name" value="HTS"/>
    <property type="match status" value="1"/>
</dbReference>
<dbReference type="PIRSF" id="PIRSF000450">
    <property type="entry name" value="H_ser_succinyltr"/>
    <property type="match status" value="1"/>
</dbReference>
<dbReference type="SUPFAM" id="SSF52317">
    <property type="entry name" value="Class I glutamine amidotransferase-like"/>
    <property type="match status" value="1"/>
</dbReference>
<protein>
    <recommendedName>
        <fullName evidence="1">Homoserine O-acetyltransferase</fullName>
        <shortName evidence="1">HAT</shortName>
        <ecNumber evidence="1">2.3.1.31</ecNumber>
    </recommendedName>
    <alternativeName>
        <fullName evidence="1">Homoserine transacetylase</fullName>
        <shortName evidence="1">HTA</shortName>
    </alternativeName>
</protein>
<feature type="chain" id="PRO_1000021852" description="Homoserine O-acetyltransferase">
    <location>
        <begin position="1"/>
        <end position="313"/>
    </location>
</feature>
<feature type="active site" description="Acyl-thioester intermediate" evidence="1">
    <location>
        <position position="142"/>
    </location>
</feature>
<feature type="active site" description="Proton acceptor" evidence="1">
    <location>
        <position position="234"/>
    </location>
</feature>
<feature type="active site" evidence="1">
    <location>
        <position position="236"/>
    </location>
</feature>
<feature type="binding site" evidence="1">
    <location>
        <position position="163"/>
    </location>
    <ligand>
        <name>substrate</name>
    </ligand>
</feature>
<feature type="binding site" evidence="1">
    <location>
        <position position="191"/>
    </location>
    <ligand>
        <name>substrate</name>
    </ligand>
</feature>
<feature type="binding site" evidence="1">
    <location>
        <position position="248"/>
    </location>
    <ligand>
        <name>substrate</name>
    </ligand>
</feature>
<feature type="site" description="Important for acyl-CoA specificity" evidence="1">
    <location>
        <position position="111"/>
    </location>
</feature>
<feature type="site" description="Important for substrate specificity" evidence="1">
    <location>
        <position position="191"/>
    </location>
</feature>
<name>METAA_STRSV</name>
<evidence type="ECO:0000255" key="1">
    <source>
        <dbReference type="HAMAP-Rule" id="MF_00295"/>
    </source>
</evidence>
<organism>
    <name type="scientific">Streptococcus sanguinis (strain SK36)</name>
    <dbReference type="NCBI Taxonomy" id="388919"/>
    <lineage>
        <taxon>Bacteria</taxon>
        <taxon>Bacillati</taxon>
        <taxon>Bacillota</taxon>
        <taxon>Bacilli</taxon>
        <taxon>Lactobacillales</taxon>
        <taxon>Streptococcaceae</taxon>
        <taxon>Streptococcus</taxon>
    </lineage>
</organism>